<name>RL10_VITRI</name>
<proteinExistence type="evidence at transcript level"/>
<keyword id="KW-0687">Ribonucleoprotein</keyword>
<keyword id="KW-0689">Ribosomal protein</keyword>
<feature type="chain" id="PRO_0000147125" description="Large ribosomal subunit protein uL16">
    <location>
        <begin position="1"/>
        <end position="220"/>
    </location>
</feature>
<reference key="1">
    <citation type="submission" date="1999-08" db="EMBL/GenBank/DDBJ databases">
        <title>Freezing tolerance in grapevines.</title>
        <authorList>
            <person name="Li X.-Z."/>
            <person name="McKersie B.D."/>
        </authorList>
    </citation>
    <scope>NUCLEOTIDE SEQUENCE [MRNA]</scope>
    <source>
        <tissue>Flower bud</tissue>
    </source>
</reference>
<protein>
    <recommendedName>
        <fullName evidence="2">Large ribosomal subunit protein uL16</fullName>
    </recommendedName>
    <alternativeName>
        <fullName>60S ribosomal protein L10</fullName>
    </alternativeName>
    <alternativeName>
        <fullName>QM protein homolog</fullName>
    </alternativeName>
</protein>
<evidence type="ECO:0000250" key="1"/>
<evidence type="ECO:0000305" key="2"/>
<comment type="subunit">
    <text evidence="1">Component of the small ribosomal subunit. Mature ribosomes consist of a small (40S) and a large (60S) subunit. The 40S subunit contains about 33 different proteins and 1 molecule of RNA (18S). The 60S subunit contains about 49 different proteins and 3 molecules of RNA (25S, 5.8S and 5S) (By similarity).</text>
</comment>
<comment type="similarity">
    <text evidence="2">Belongs to the universal ribosomal protein uL16 family.</text>
</comment>
<dbReference type="EMBL" id="AF180758">
    <property type="protein sequence ID" value="AAD56018.1"/>
    <property type="molecule type" value="mRNA"/>
</dbReference>
<dbReference type="SMR" id="Q9SPB3"/>
<dbReference type="GO" id="GO:1990904">
    <property type="term" value="C:ribonucleoprotein complex"/>
    <property type="evidence" value="ECO:0007669"/>
    <property type="project" value="UniProtKB-KW"/>
</dbReference>
<dbReference type="GO" id="GO:0005840">
    <property type="term" value="C:ribosome"/>
    <property type="evidence" value="ECO:0007669"/>
    <property type="project" value="UniProtKB-KW"/>
</dbReference>
<dbReference type="GO" id="GO:0003735">
    <property type="term" value="F:structural constituent of ribosome"/>
    <property type="evidence" value="ECO:0007669"/>
    <property type="project" value="InterPro"/>
</dbReference>
<dbReference type="GO" id="GO:0006412">
    <property type="term" value="P:translation"/>
    <property type="evidence" value="ECO:0007669"/>
    <property type="project" value="InterPro"/>
</dbReference>
<dbReference type="CDD" id="cd01433">
    <property type="entry name" value="Ribosomal_L16_L10e"/>
    <property type="match status" value="1"/>
</dbReference>
<dbReference type="FunFam" id="3.90.1170.10:FF:000002">
    <property type="entry name" value="60S ribosomal protein L10"/>
    <property type="match status" value="1"/>
</dbReference>
<dbReference type="FunFam" id="3.30.60.300:FF:000003">
    <property type="entry name" value="60S ribosomal protein L10, putative"/>
    <property type="match status" value="1"/>
</dbReference>
<dbReference type="Gene3D" id="3.90.1170.10">
    <property type="entry name" value="Ribosomal protein L10e/L16"/>
    <property type="match status" value="1"/>
</dbReference>
<dbReference type="InterPro" id="IPR047873">
    <property type="entry name" value="Ribosomal_uL16"/>
</dbReference>
<dbReference type="InterPro" id="IPR018255">
    <property type="entry name" value="Ribosomal_uL16_CS_euk_arc"/>
</dbReference>
<dbReference type="InterPro" id="IPR016180">
    <property type="entry name" value="Ribosomal_uL16_dom"/>
</dbReference>
<dbReference type="InterPro" id="IPR001197">
    <property type="entry name" value="Ribosomal_uL16_euk_arch"/>
</dbReference>
<dbReference type="InterPro" id="IPR036920">
    <property type="entry name" value="Ribosomal_uL16_sf"/>
</dbReference>
<dbReference type="NCBIfam" id="NF003239">
    <property type="entry name" value="PRK04199.1-4"/>
    <property type="match status" value="1"/>
</dbReference>
<dbReference type="NCBIfam" id="TIGR00279">
    <property type="entry name" value="uL16_euk_arch"/>
    <property type="match status" value="1"/>
</dbReference>
<dbReference type="PANTHER" id="PTHR11726">
    <property type="entry name" value="60S RIBOSOMAL PROTEIN L10"/>
    <property type="match status" value="1"/>
</dbReference>
<dbReference type="Pfam" id="PF00252">
    <property type="entry name" value="Ribosomal_L16"/>
    <property type="match status" value="1"/>
</dbReference>
<dbReference type="PIRSF" id="PIRSF005590">
    <property type="entry name" value="Ribosomal_L10"/>
    <property type="match status" value="1"/>
</dbReference>
<dbReference type="SUPFAM" id="SSF54686">
    <property type="entry name" value="Ribosomal protein L16p/L10e"/>
    <property type="match status" value="1"/>
</dbReference>
<dbReference type="PROSITE" id="PS01257">
    <property type="entry name" value="RIBOSOMAL_L10E"/>
    <property type="match status" value="1"/>
</dbReference>
<sequence>MGRRPARCYRQIKNKPYPKSRYCRGVPDPKIRIYDVGMKKKGVDEFPFCVHLVSWEKENVSSEALEAARIACNKYMTKYAGKDAFHLRVRVHPFHVLRINKMLSCAGADRLQTGMRGAFGKPQGTCARVSIGQVLLSVRCKDGNSHHAQEALRRAKFKFPARQKIIVSRKWGFTKFNRTDYIKWKSQNRILPDGVNAKLLGCHGPLANRQPGKAFINACT</sequence>
<accession>Q9SPB3</accession>
<gene>
    <name type="primary">RPL10</name>
</gene>
<organism>
    <name type="scientific">Vitis riparia</name>
    <name type="common">Frost grape</name>
    <name type="synonym">Vitis vulpina</name>
    <dbReference type="NCBI Taxonomy" id="96939"/>
    <lineage>
        <taxon>Eukaryota</taxon>
        <taxon>Viridiplantae</taxon>
        <taxon>Streptophyta</taxon>
        <taxon>Embryophyta</taxon>
        <taxon>Tracheophyta</taxon>
        <taxon>Spermatophyta</taxon>
        <taxon>Magnoliopsida</taxon>
        <taxon>eudicotyledons</taxon>
        <taxon>Gunneridae</taxon>
        <taxon>Pentapetalae</taxon>
        <taxon>rosids</taxon>
        <taxon>Vitales</taxon>
        <taxon>Vitaceae</taxon>
        <taxon>Viteae</taxon>
        <taxon>Vitis</taxon>
    </lineage>
</organism>